<accession>A5CWD9</accession>
<feature type="chain" id="PRO_1000005382" description="Small ribosomal subunit protein bS6">
    <location>
        <begin position="1"/>
        <end position="113"/>
    </location>
</feature>
<name>RS6_VESOH</name>
<proteinExistence type="inferred from homology"/>
<protein>
    <recommendedName>
        <fullName evidence="1">Small ribosomal subunit protein bS6</fullName>
    </recommendedName>
    <alternativeName>
        <fullName evidence="2">30S ribosomal protein S6</fullName>
    </alternativeName>
</protein>
<gene>
    <name evidence="1" type="primary">rpsF</name>
    <name type="ordered locus">COSY_0609</name>
</gene>
<organism>
    <name type="scientific">Vesicomyosocius okutanii subsp. Calyptogena okutanii (strain HA)</name>
    <dbReference type="NCBI Taxonomy" id="412965"/>
    <lineage>
        <taxon>Bacteria</taxon>
        <taxon>Pseudomonadati</taxon>
        <taxon>Pseudomonadota</taxon>
        <taxon>Gammaproteobacteria</taxon>
        <taxon>Candidatus Pseudothioglobaceae</taxon>
        <taxon>Candidatus Vesicomyosocius</taxon>
    </lineage>
</organism>
<sequence>MRHYEITLIVHPDQSAQVGTMMDKYKEIINADGGKIHKEEDWGRKHLAYPIKKIYKAHYLMMNIECDQEMLDKLNYNFRFNDAILRSLIISKNKAITTPSIMMVNKDKEKGKS</sequence>
<dbReference type="EMBL" id="AP009247">
    <property type="protein sequence ID" value="BAF61722.1"/>
    <property type="molecule type" value="Genomic_DNA"/>
</dbReference>
<dbReference type="RefSeq" id="WP_011929992.1">
    <property type="nucleotide sequence ID" value="NC_009465.1"/>
</dbReference>
<dbReference type="SMR" id="A5CWD9"/>
<dbReference type="STRING" id="412965.COSY_0609"/>
<dbReference type="KEGG" id="vok:COSY_0609"/>
<dbReference type="eggNOG" id="COG0360">
    <property type="taxonomic scope" value="Bacteria"/>
</dbReference>
<dbReference type="HOGENOM" id="CLU_113441_6_1_6"/>
<dbReference type="OrthoDB" id="9812702at2"/>
<dbReference type="Proteomes" id="UP000000247">
    <property type="component" value="Chromosome"/>
</dbReference>
<dbReference type="GO" id="GO:0022627">
    <property type="term" value="C:cytosolic small ribosomal subunit"/>
    <property type="evidence" value="ECO:0007669"/>
    <property type="project" value="TreeGrafter"/>
</dbReference>
<dbReference type="GO" id="GO:0070181">
    <property type="term" value="F:small ribosomal subunit rRNA binding"/>
    <property type="evidence" value="ECO:0007669"/>
    <property type="project" value="TreeGrafter"/>
</dbReference>
<dbReference type="GO" id="GO:0003735">
    <property type="term" value="F:structural constituent of ribosome"/>
    <property type="evidence" value="ECO:0007669"/>
    <property type="project" value="InterPro"/>
</dbReference>
<dbReference type="GO" id="GO:0006412">
    <property type="term" value="P:translation"/>
    <property type="evidence" value="ECO:0007669"/>
    <property type="project" value="UniProtKB-UniRule"/>
</dbReference>
<dbReference type="CDD" id="cd00473">
    <property type="entry name" value="bS6"/>
    <property type="match status" value="1"/>
</dbReference>
<dbReference type="Gene3D" id="3.30.70.60">
    <property type="match status" value="1"/>
</dbReference>
<dbReference type="HAMAP" id="MF_00360">
    <property type="entry name" value="Ribosomal_bS6"/>
    <property type="match status" value="1"/>
</dbReference>
<dbReference type="InterPro" id="IPR000529">
    <property type="entry name" value="Ribosomal_bS6"/>
</dbReference>
<dbReference type="InterPro" id="IPR020815">
    <property type="entry name" value="Ribosomal_bS6_CS"/>
</dbReference>
<dbReference type="InterPro" id="IPR035980">
    <property type="entry name" value="Ribosomal_bS6_sf"/>
</dbReference>
<dbReference type="InterPro" id="IPR020814">
    <property type="entry name" value="Ribosomal_S6_plastid/chlpt"/>
</dbReference>
<dbReference type="InterPro" id="IPR014717">
    <property type="entry name" value="Transl_elong_EF1B/ribsomal_bS6"/>
</dbReference>
<dbReference type="NCBIfam" id="TIGR00166">
    <property type="entry name" value="S6"/>
    <property type="match status" value="1"/>
</dbReference>
<dbReference type="PANTHER" id="PTHR21011">
    <property type="entry name" value="MITOCHONDRIAL 28S RIBOSOMAL PROTEIN S6"/>
    <property type="match status" value="1"/>
</dbReference>
<dbReference type="PANTHER" id="PTHR21011:SF1">
    <property type="entry name" value="SMALL RIBOSOMAL SUBUNIT PROTEIN BS6M"/>
    <property type="match status" value="1"/>
</dbReference>
<dbReference type="Pfam" id="PF01250">
    <property type="entry name" value="Ribosomal_S6"/>
    <property type="match status" value="1"/>
</dbReference>
<dbReference type="SUPFAM" id="SSF54995">
    <property type="entry name" value="Ribosomal protein S6"/>
    <property type="match status" value="1"/>
</dbReference>
<dbReference type="PROSITE" id="PS01048">
    <property type="entry name" value="RIBOSOMAL_S6"/>
    <property type="match status" value="1"/>
</dbReference>
<comment type="function">
    <text evidence="1">Binds together with bS18 to 16S ribosomal RNA.</text>
</comment>
<comment type="similarity">
    <text evidence="1">Belongs to the bacterial ribosomal protein bS6 family.</text>
</comment>
<evidence type="ECO:0000255" key="1">
    <source>
        <dbReference type="HAMAP-Rule" id="MF_00360"/>
    </source>
</evidence>
<evidence type="ECO:0000305" key="2"/>
<reference key="1">
    <citation type="journal article" date="2007" name="Curr. Biol.">
        <title>Reduced genome of the thioautotrophic intracellular symbiont in a deep-sea clam, Calyptogena okutanii.</title>
        <authorList>
            <person name="Kuwahara H."/>
            <person name="Yoshida T."/>
            <person name="Takaki Y."/>
            <person name="Shimamura S."/>
            <person name="Nishi S."/>
            <person name="Harada M."/>
            <person name="Matsuyama K."/>
            <person name="Takishita K."/>
            <person name="Kawato M."/>
            <person name="Uematsu K."/>
            <person name="Fujiwara Y."/>
            <person name="Sato T."/>
            <person name="Kato C."/>
            <person name="Kitagawa M."/>
            <person name="Kato I."/>
            <person name="Maruyama T."/>
        </authorList>
    </citation>
    <scope>NUCLEOTIDE SEQUENCE [LARGE SCALE GENOMIC DNA]</scope>
    <source>
        <strain>HA</strain>
    </source>
</reference>
<keyword id="KW-1185">Reference proteome</keyword>
<keyword id="KW-0687">Ribonucleoprotein</keyword>
<keyword id="KW-0689">Ribosomal protein</keyword>
<keyword id="KW-0694">RNA-binding</keyword>
<keyword id="KW-0699">rRNA-binding</keyword>